<sequence length="415" mass="46492">MIQETRRLADEYEISEILGRGGFSVVRKGISRKSSSSSDKTDVAIKTLKRPFAPSNPPPLPPHARRNDQNSFAAAAFQTRKQVSISNVLLTNEILVMRKIVENVSPHPNVIDLYDVYEDENGVHLVLELCSGGELFDRIVKQERYSEVGAAAVVRQIAQGLAALHRSNIVHRDLKPENCLFLDNTVDSPLKIMDFGLSSVEEFTDPVVGLFGSIDYVSPEALSQGQVTSKSDMWALGVILYILLSGYPPFIAQSNRQKQQMIMAGEFSFYEKTWKGFLCQPKQLISSLLKVDPDKRPSAQELLDHPWVVGLSAREDQMDAEIVSRLQSFNARRKLRAAAIASVWTSSIFLRTKKLKSLLGSYDLKPDEIKNLSSHFKKICVKGDNATLSEFRLSCKRLIQLRLVSMSLRAEPARL</sequence>
<name>KCCS_MALDO</name>
<keyword id="KW-0067">ATP-binding</keyword>
<keyword id="KW-0106">Calcium</keyword>
<keyword id="KW-0112">Calmodulin-binding</keyword>
<keyword id="KW-0418">Kinase</keyword>
<keyword id="KW-0547">Nucleotide-binding</keyword>
<keyword id="KW-0723">Serine/threonine-protein kinase</keyword>
<keyword id="KW-0808">Transferase</keyword>
<comment type="function">
    <text>May be involved in signal transduction processes.</text>
</comment>
<comment type="catalytic activity">
    <reaction>
        <text>L-seryl-[protein] + ATP = O-phospho-L-seryl-[protein] + ADP + H(+)</text>
        <dbReference type="Rhea" id="RHEA:17989"/>
        <dbReference type="Rhea" id="RHEA-COMP:9863"/>
        <dbReference type="Rhea" id="RHEA-COMP:11604"/>
        <dbReference type="ChEBI" id="CHEBI:15378"/>
        <dbReference type="ChEBI" id="CHEBI:29999"/>
        <dbReference type="ChEBI" id="CHEBI:30616"/>
        <dbReference type="ChEBI" id="CHEBI:83421"/>
        <dbReference type="ChEBI" id="CHEBI:456216"/>
        <dbReference type="EC" id="2.7.11.17"/>
    </reaction>
</comment>
<comment type="catalytic activity">
    <reaction>
        <text>L-threonyl-[protein] + ATP = O-phospho-L-threonyl-[protein] + ADP + H(+)</text>
        <dbReference type="Rhea" id="RHEA:46608"/>
        <dbReference type="Rhea" id="RHEA-COMP:11060"/>
        <dbReference type="Rhea" id="RHEA-COMP:11605"/>
        <dbReference type="ChEBI" id="CHEBI:15378"/>
        <dbReference type="ChEBI" id="CHEBI:30013"/>
        <dbReference type="ChEBI" id="CHEBI:30616"/>
        <dbReference type="ChEBI" id="CHEBI:61977"/>
        <dbReference type="ChEBI" id="CHEBI:456216"/>
        <dbReference type="EC" id="2.7.11.17"/>
    </reaction>
</comment>
<comment type="similarity">
    <text evidence="4">Belongs to the protein kinase superfamily. CAMK Ser/Thr protein kinase family. CaMK subfamily.</text>
</comment>
<organism>
    <name type="scientific">Malus domestica</name>
    <name type="common">Apple</name>
    <name type="synonym">Pyrus malus</name>
    <dbReference type="NCBI Taxonomy" id="3750"/>
    <lineage>
        <taxon>Eukaryota</taxon>
        <taxon>Viridiplantae</taxon>
        <taxon>Streptophyta</taxon>
        <taxon>Embryophyta</taxon>
        <taxon>Tracheophyta</taxon>
        <taxon>Spermatophyta</taxon>
        <taxon>Magnoliopsida</taxon>
        <taxon>eudicotyledons</taxon>
        <taxon>Gunneridae</taxon>
        <taxon>Pentapetalae</taxon>
        <taxon>rosids</taxon>
        <taxon>fabids</taxon>
        <taxon>Rosales</taxon>
        <taxon>Rosaceae</taxon>
        <taxon>Amygdaloideae</taxon>
        <taxon>Maleae</taxon>
        <taxon>Malus</taxon>
    </lineage>
</organism>
<accession>Q07250</accession>
<reference key="1">
    <citation type="journal article" date="1993" name="Plant Physiol.">
        <title>A calcium/calmodulin-binding serine/threonine protein kinase homologous to the mammalian type II calcium/calmodulin-dependent protein kinase is expressed in plant cells.</title>
        <authorList>
            <person name="Watillon B."/>
            <person name="Kettmann R."/>
            <person name="Boxus P."/>
            <person name="Burny A."/>
        </authorList>
    </citation>
    <scope>NUCLEOTIDE SEQUENCE [MRNA]</scope>
    <source>
        <strain>cv. Wijcik</strain>
    </source>
</reference>
<reference key="2">
    <citation type="journal article" date="1995" name="Plant Physiol.">
        <title>Structure of a calmodulin-binding protein kinase gene from apple.</title>
        <authorList>
            <person name="Watillon B."/>
            <person name="Kettmann R."/>
            <person name="Boxus P."/>
            <person name="Burny A."/>
        </authorList>
    </citation>
    <scope>NUCLEOTIDE SEQUENCE [GENOMIC DNA]</scope>
</reference>
<reference key="3">
    <citation type="journal article" date="1992" name="Plant Sci.">
        <title>Cloning and characterization of an apple (Malus domestica [L.] Borkh) cDNA encoding a calmodulin-binding protein domain similar to the calmodulin-binding region of mammalian CaM kinase II.</title>
        <authorList>
            <person name="Watillon B."/>
            <person name="Kettmann R."/>
            <person name="Boxus P."/>
            <person name="Burny A."/>
        </authorList>
    </citation>
    <scope>NUCLEOTIDE SEQUENCE OF 266-391</scope>
    <source>
        <strain>cv. Wijcik</strain>
    </source>
</reference>
<proteinExistence type="evidence at transcript level"/>
<protein>
    <recommendedName>
        <fullName>Calcium/calmodulin-dependent serine/threonine-protein kinase</fullName>
        <ecNumber>2.7.11.17</ecNumber>
    </recommendedName>
</protein>
<evidence type="ECO:0000250" key="1"/>
<evidence type="ECO:0000255" key="2">
    <source>
        <dbReference type="PROSITE-ProRule" id="PRU00159"/>
    </source>
</evidence>
<evidence type="ECO:0000255" key="3">
    <source>
        <dbReference type="PROSITE-ProRule" id="PRU10027"/>
    </source>
</evidence>
<evidence type="ECO:0000305" key="4"/>
<dbReference type="EC" id="2.7.11.17"/>
<dbReference type="EMBL" id="Z17313">
    <property type="protein sequence ID" value="CAA78961.1"/>
    <property type="molecule type" value="mRNA"/>
</dbReference>
<dbReference type="EMBL" id="Z38126">
    <property type="protein sequence ID" value="CAA86286.1"/>
    <property type="molecule type" value="Genomic_DNA"/>
</dbReference>
<dbReference type="PIR" id="JQ2251">
    <property type="entry name" value="JQ2251"/>
</dbReference>
<dbReference type="SMR" id="Q07250"/>
<dbReference type="BRENDA" id="2.7.11.17">
    <property type="organism ID" value="3164"/>
</dbReference>
<dbReference type="GO" id="GO:0005524">
    <property type="term" value="F:ATP binding"/>
    <property type="evidence" value="ECO:0007669"/>
    <property type="project" value="UniProtKB-KW"/>
</dbReference>
<dbReference type="GO" id="GO:0004683">
    <property type="term" value="F:calcium/calmodulin-dependent protein kinase activity"/>
    <property type="evidence" value="ECO:0007669"/>
    <property type="project" value="UniProtKB-EC"/>
</dbReference>
<dbReference type="GO" id="GO:0005516">
    <property type="term" value="F:calmodulin binding"/>
    <property type="evidence" value="ECO:0007669"/>
    <property type="project" value="UniProtKB-KW"/>
</dbReference>
<dbReference type="GO" id="GO:0106310">
    <property type="term" value="F:protein serine kinase activity"/>
    <property type="evidence" value="ECO:0007669"/>
    <property type="project" value="RHEA"/>
</dbReference>
<dbReference type="CDD" id="cd05117">
    <property type="entry name" value="STKc_CAMK"/>
    <property type="match status" value="1"/>
</dbReference>
<dbReference type="FunFam" id="1.10.510.10:FF:000610">
    <property type="entry name" value="Calcium and calcium/calmodulin-dependent serine/threonine-protein kinase"/>
    <property type="match status" value="1"/>
</dbReference>
<dbReference type="Gene3D" id="3.30.200.20">
    <property type="entry name" value="Phosphorylase Kinase, domain 1"/>
    <property type="match status" value="2"/>
</dbReference>
<dbReference type="Gene3D" id="1.10.510.10">
    <property type="entry name" value="Transferase(Phosphotransferase) domain 1"/>
    <property type="match status" value="1"/>
</dbReference>
<dbReference type="InterPro" id="IPR050205">
    <property type="entry name" value="CDPK_Ser/Thr_kinases"/>
</dbReference>
<dbReference type="InterPro" id="IPR011009">
    <property type="entry name" value="Kinase-like_dom_sf"/>
</dbReference>
<dbReference type="InterPro" id="IPR000719">
    <property type="entry name" value="Prot_kinase_dom"/>
</dbReference>
<dbReference type="InterPro" id="IPR017441">
    <property type="entry name" value="Protein_kinase_ATP_BS"/>
</dbReference>
<dbReference type="InterPro" id="IPR008271">
    <property type="entry name" value="Ser/Thr_kinase_AS"/>
</dbReference>
<dbReference type="PANTHER" id="PTHR24349">
    <property type="entry name" value="SERINE/THREONINE-PROTEIN KINASE"/>
    <property type="match status" value="1"/>
</dbReference>
<dbReference type="Pfam" id="PF00069">
    <property type="entry name" value="Pkinase"/>
    <property type="match status" value="1"/>
</dbReference>
<dbReference type="SMART" id="SM00220">
    <property type="entry name" value="S_TKc"/>
    <property type="match status" value="1"/>
</dbReference>
<dbReference type="SUPFAM" id="SSF56112">
    <property type="entry name" value="Protein kinase-like (PK-like)"/>
    <property type="match status" value="1"/>
</dbReference>
<dbReference type="PROSITE" id="PS00107">
    <property type="entry name" value="PROTEIN_KINASE_ATP"/>
    <property type="match status" value="1"/>
</dbReference>
<dbReference type="PROSITE" id="PS50011">
    <property type="entry name" value="PROTEIN_KINASE_DOM"/>
    <property type="match status" value="1"/>
</dbReference>
<dbReference type="PROSITE" id="PS00108">
    <property type="entry name" value="PROTEIN_KINASE_ST"/>
    <property type="match status" value="1"/>
</dbReference>
<feature type="chain" id="PRO_0000086110" description="Calcium/calmodulin-dependent serine/threonine-protein kinase">
    <location>
        <begin position="1"/>
        <end position="415"/>
    </location>
</feature>
<feature type="domain" description="Protein kinase" evidence="2">
    <location>
        <begin position="12"/>
        <end position="308"/>
    </location>
</feature>
<feature type="region of interest" description="Calmodulin-binding" evidence="1">
    <location>
        <begin position="318"/>
        <end position="328"/>
    </location>
</feature>
<feature type="active site" description="Proton acceptor" evidence="2 3">
    <location>
        <position position="173"/>
    </location>
</feature>
<feature type="binding site" evidence="2">
    <location>
        <begin position="18"/>
        <end position="26"/>
    </location>
    <ligand>
        <name>ATP</name>
        <dbReference type="ChEBI" id="CHEBI:30616"/>
    </ligand>
</feature>
<feature type="binding site" evidence="2">
    <location>
        <position position="46"/>
    </location>
    <ligand>
        <name>ATP</name>
        <dbReference type="ChEBI" id="CHEBI:30616"/>
    </ligand>
</feature>